<protein>
    <recommendedName>
        <fullName evidence="1">Biotin synthase</fullName>
        <ecNumber evidence="1">2.8.1.6</ecNumber>
    </recommendedName>
</protein>
<dbReference type="EC" id="2.8.1.6" evidence="1"/>
<dbReference type="EMBL" id="CP000614">
    <property type="protein sequence ID" value="ABO56020.1"/>
    <property type="molecule type" value="Genomic_DNA"/>
</dbReference>
<dbReference type="SMR" id="A4JIB7"/>
<dbReference type="KEGG" id="bvi:Bcep1808_3029"/>
<dbReference type="eggNOG" id="COG0502">
    <property type="taxonomic scope" value="Bacteria"/>
</dbReference>
<dbReference type="HOGENOM" id="CLU_033172_1_2_4"/>
<dbReference type="UniPathway" id="UPA00078">
    <property type="reaction ID" value="UER00162"/>
</dbReference>
<dbReference type="Proteomes" id="UP000002287">
    <property type="component" value="Chromosome 1"/>
</dbReference>
<dbReference type="GO" id="GO:0051537">
    <property type="term" value="F:2 iron, 2 sulfur cluster binding"/>
    <property type="evidence" value="ECO:0007669"/>
    <property type="project" value="UniProtKB-KW"/>
</dbReference>
<dbReference type="GO" id="GO:0051539">
    <property type="term" value="F:4 iron, 4 sulfur cluster binding"/>
    <property type="evidence" value="ECO:0007669"/>
    <property type="project" value="UniProtKB-KW"/>
</dbReference>
<dbReference type="GO" id="GO:0004076">
    <property type="term" value="F:biotin synthase activity"/>
    <property type="evidence" value="ECO:0007669"/>
    <property type="project" value="UniProtKB-UniRule"/>
</dbReference>
<dbReference type="GO" id="GO:0005506">
    <property type="term" value="F:iron ion binding"/>
    <property type="evidence" value="ECO:0007669"/>
    <property type="project" value="UniProtKB-UniRule"/>
</dbReference>
<dbReference type="GO" id="GO:0009102">
    <property type="term" value="P:biotin biosynthetic process"/>
    <property type="evidence" value="ECO:0007669"/>
    <property type="project" value="UniProtKB-UniRule"/>
</dbReference>
<dbReference type="CDD" id="cd01335">
    <property type="entry name" value="Radical_SAM"/>
    <property type="match status" value="1"/>
</dbReference>
<dbReference type="FunFam" id="3.20.20.70:FF:000011">
    <property type="entry name" value="Biotin synthase"/>
    <property type="match status" value="1"/>
</dbReference>
<dbReference type="Gene3D" id="3.20.20.70">
    <property type="entry name" value="Aldolase class I"/>
    <property type="match status" value="1"/>
</dbReference>
<dbReference type="HAMAP" id="MF_01694">
    <property type="entry name" value="BioB"/>
    <property type="match status" value="1"/>
</dbReference>
<dbReference type="InterPro" id="IPR013785">
    <property type="entry name" value="Aldolase_TIM"/>
</dbReference>
<dbReference type="InterPro" id="IPR010722">
    <property type="entry name" value="BATS_dom"/>
</dbReference>
<dbReference type="InterPro" id="IPR002684">
    <property type="entry name" value="Biotin_synth/BioAB"/>
</dbReference>
<dbReference type="InterPro" id="IPR024177">
    <property type="entry name" value="Biotin_synthase"/>
</dbReference>
<dbReference type="InterPro" id="IPR006638">
    <property type="entry name" value="Elp3/MiaA/NifB-like_rSAM"/>
</dbReference>
<dbReference type="InterPro" id="IPR007197">
    <property type="entry name" value="rSAM"/>
</dbReference>
<dbReference type="NCBIfam" id="TIGR00433">
    <property type="entry name" value="bioB"/>
    <property type="match status" value="1"/>
</dbReference>
<dbReference type="PANTHER" id="PTHR22976">
    <property type="entry name" value="BIOTIN SYNTHASE"/>
    <property type="match status" value="1"/>
</dbReference>
<dbReference type="PANTHER" id="PTHR22976:SF2">
    <property type="entry name" value="BIOTIN SYNTHASE, MITOCHONDRIAL"/>
    <property type="match status" value="1"/>
</dbReference>
<dbReference type="Pfam" id="PF06968">
    <property type="entry name" value="BATS"/>
    <property type="match status" value="1"/>
</dbReference>
<dbReference type="Pfam" id="PF04055">
    <property type="entry name" value="Radical_SAM"/>
    <property type="match status" value="1"/>
</dbReference>
<dbReference type="PIRSF" id="PIRSF001619">
    <property type="entry name" value="Biotin_synth"/>
    <property type="match status" value="1"/>
</dbReference>
<dbReference type="SFLD" id="SFLDF00272">
    <property type="entry name" value="biotin_synthase"/>
    <property type="match status" value="1"/>
</dbReference>
<dbReference type="SFLD" id="SFLDG01278">
    <property type="entry name" value="biotin_synthase_like"/>
    <property type="match status" value="1"/>
</dbReference>
<dbReference type="SMART" id="SM00876">
    <property type="entry name" value="BATS"/>
    <property type="match status" value="1"/>
</dbReference>
<dbReference type="SMART" id="SM00729">
    <property type="entry name" value="Elp3"/>
    <property type="match status" value="1"/>
</dbReference>
<dbReference type="SUPFAM" id="SSF102114">
    <property type="entry name" value="Radical SAM enzymes"/>
    <property type="match status" value="1"/>
</dbReference>
<dbReference type="PROSITE" id="PS51918">
    <property type="entry name" value="RADICAL_SAM"/>
    <property type="match status" value="1"/>
</dbReference>
<accession>A4JIB7</accession>
<sequence length="339" mass="36951">MTQAQTAAVQPDAIPVAAPTPQRWRVADVVALFELPFNDLMFRAQQVHREHFDANAVQLSTLLSIKTGGCEEDCGYCSQSSHHDTGLKAEKLMDVDAVLEAARAAKASGASRFCMGAAWRNPKERHMPALTEMVRGVKELGLETCMTLGMLEDEQAQQLAHAGLDYYNHNLDTSPEFYGQVISTRTYQDRLDTLDRVRDAGINVCCGGIIGMGESRRERAGLISQLANLNPYPDSVPINNLVAIEGTPLEGTAPLDPFEFVRTIAVARITMPKAVVRLSAGREQLDDGLQALCFLAGANSMFYGDQLLTTSNPQSQKDRALFERLGMRASDADAMSADA</sequence>
<keyword id="KW-0001">2Fe-2S</keyword>
<keyword id="KW-0004">4Fe-4S</keyword>
<keyword id="KW-0093">Biotin biosynthesis</keyword>
<keyword id="KW-0408">Iron</keyword>
<keyword id="KW-0411">Iron-sulfur</keyword>
<keyword id="KW-0479">Metal-binding</keyword>
<keyword id="KW-0949">S-adenosyl-L-methionine</keyword>
<keyword id="KW-0808">Transferase</keyword>
<proteinExistence type="inferred from homology"/>
<reference key="1">
    <citation type="submission" date="2007-03" db="EMBL/GenBank/DDBJ databases">
        <title>Complete sequence of chromosome 1 of Burkholderia vietnamiensis G4.</title>
        <authorList>
            <consortium name="US DOE Joint Genome Institute"/>
            <person name="Copeland A."/>
            <person name="Lucas S."/>
            <person name="Lapidus A."/>
            <person name="Barry K."/>
            <person name="Detter J.C."/>
            <person name="Glavina del Rio T."/>
            <person name="Hammon N."/>
            <person name="Israni S."/>
            <person name="Dalin E."/>
            <person name="Tice H."/>
            <person name="Pitluck S."/>
            <person name="Chain P."/>
            <person name="Malfatti S."/>
            <person name="Shin M."/>
            <person name="Vergez L."/>
            <person name="Schmutz J."/>
            <person name="Larimer F."/>
            <person name="Land M."/>
            <person name="Hauser L."/>
            <person name="Kyrpides N."/>
            <person name="Tiedje J."/>
            <person name="Richardson P."/>
        </authorList>
    </citation>
    <scope>NUCLEOTIDE SEQUENCE [LARGE SCALE GENOMIC DNA]</scope>
    <source>
        <strain>G4 / LMG 22486</strain>
    </source>
</reference>
<comment type="function">
    <text evidence="1">Catalyzes the conversion of dethiobiotin (DTB) to biotin by the insertion of a sulfur atom into dethiobiotin via a radical-based mechanism.</text>
</comment>
<comment type="catalytic activity">
    <reaction evidence="1">
        <text>(4R,5S)-dethiobiotin + (sulfur carrier)-SH + 2 reduced [2Fe-2S]-[ferredoxin] + 2 S-adenosyl-L-methionine = (sulfur carrier)-H + biotin + 2 5'-deoxyadenosine + 2 L-methionine + 2 oxidized [2Fe-2S]-[ferredoxin]</text>
        <dbReference type="Rhea" id="RHEA:22060"/>
        <dbReference type="Rhea" id="RHEA-COMP:10000"/>
        <dbReference type="Rhea" id="RHEA-COMP:10001"/>
        <dbReference type="Rhea" id="RHEA-COMP:14737"/>
        <dbReference type="Rhea" id="RHEA-COMP:14739"/>
        <dbReference type="ChEBI" id="CHEBI:17319"/>
        <dbReference type="ChEBI" id="CHEBI:29917"/>
        <dbReference type="ChEBI" id="CHEBI:33737"/>
        <dbReference type="ChEBI" id="CHEBI:33738"/>
        <dbReference type="ChEBI" id="CHEBI:57586"/>
        <dbReference type="ChEBI" id="CHEBI:57844"/>
        <dbReference type="ChEBI" id="CHEBI:59789"/>
        <dbReference type="ChEBI" id="CHEBI:64428"/>
        <dbReference type="ChEBI" id="CHEBI:149473"/>
        <dbReference type="EC" id="2.8.1.6"/>
    </reaction>
</comment>
<comment type="cofactor">
    <cofactor evidence="1">
        <name>[4Fe-4S] cluster</name>
        <dbReference type="ChEBI" id="CHEBI:49883"/>
    </cofactor>
    <text evidence="1">Binds 1 [4Fe-4S] cluster. The cluster is coordinated with 3 cysteines and an exchangeable S-adenosyl-L-methionine.</text>
</comment>
<comment type="cofactor">
    <cofactor evidence="1">
        <name>[2Fe-2S] cluster</name>
        <dbReference type="ChEBI" id="CHEBI:190135"/>
    </cofactor>
    <text evidence="1">Binds 1 [2Fe-2S] cluster. The cluster is coordinated with 3 cysteines and 1 arginine.</text>
</comment>
<comment type="pathway">
    <text evidence="1">Cofactor biosynthesis; biotin biosynthesis; biotin from 7,8-diaminononanoate: step 2/2.</text>
</comment>
<comment type="subunit">
    <text evidence="1">Homodimer.</text>
</comment>
<comment type="similarity">
    <text evidence="1">Belongs to the radical SAM superfamily. Biotin synthase family.</text>
</comment>
<feature type="chain" id="PRO_0000381277" description="Biotin synthase">
    <location>
        <begin position="1"/>
        <end position="339"/>
    </location>
</feature>
<feature type="domain" description="Radical SAM core" evidence="2">
    <location>
        <begin position="55"/>
        <end position="282"/>
    </location>
</feature>
<feature type="binding site" evidence="1">
    <location>
        <position position="70"/>
    </location>
    <ligand>
        <name>[4Fe-4S] cluster</name>
        <dbReference type="ChEBI" id="CHEBI:49883"/>
        <note>4Fe-4S-S-AdoMet</note>
    </ligand>
</feature>
<feature type="binding site" evidence="1">
    <location>
        <position position="74"/>
    </location>
    <ligand>
        <name>[4Fe-4S] cluster</name>
        <dbReference type="ChEBI" id="CHEBI:49883"/>
        <note>4Fe-4S-S-AdoMet</note>
    </ligand>
</feature>
<feature type="binding site" evidence="1">
    <location>
        <position position="77"/>
    </location>
    <ligand>
        <name>[4Fe-4S] cluster</name>
        <dbReference type="ChEBI" id="CHEBI:49883"/>
        <note>4Fe-4S-S-AdoMet</note>
    </ligand>
</feature>
<feature type="binding site" evidence="1">
    <location>
        <position position="114"/>
    </location>
    <ligand>
        <name>[2Fe-2S] cluster</name>
        <dbReference type="ChEBI" id="CHEBI:190135"/>
    </ligand>
</feature>
<feature type="binding site" evidence="1">
    <location>
        <position position="145"/>
    </location>
    <ligand>
        <name>[2Fe-2S] cluster</name>
        <dbReference type="ChEBI" id="CHEBI:190135"/>
    </ligand>
</feature>
<feature type="binding site" evidence="1">
    <location>
        <position position="205"/>
    </location>
    <ligand>
        <name>[2Fe-2S] cluster</name>
        <dbReference type="ChEBI" id="CHEBI:190135"/>
    </ligand>
</feature>
<feature type="binding site" evidence="1">
    <location>
        <position position="277"/>
    </location>
    <ligand>
        <name>[2Fe-2S] cluster</name>
        <dbReference type="ChEBI" id="CHEBI:190135"/>
    </ligand>
</feature>
<gene>
    <name evidence="1" type="primary">bioB</name>
    <name type="ordered locus">Bcep1808_3029</name>
</gene>
<evidence type="ECO:0000255" key="1">
    <source>
        <dbReference type="HAMAP-Rule" id="MF_01694"/>
    </source>
</evidence>
<evidence type="ECO:0000255" key="2">
    <source>
        <dbReference type="PROSITE-ProRule" id="PRU01266"/>
    </source>
</evidence>
<organism>
    <name type="scientific">Burkholderia vietnamiensis (strain G4 / LMG 22486)</name>
    <name type="common">Burkholderia cepacia (strain R1808)</name>
    <dbReference type="NCBI Taxonomy" id="269482"/>
    <lineage>
        <taxon>Bacteria</taxon>
        <taxon>Pseudomonadati</taxon>
        <taxon>Pseudomonadota</taxon>
        <taxon>Betaproteobacteria</taxon>
        <taxon>Burkholderiales</taxon>
        <taxon>Burkholderiaceae</taxon>
        <taxon>Burkholderia</taxon>
        <taxon>Burkholderia cepacia complex</taxon>
    </lineage>
</organism>
<name>BIOB_BURVG</name>